<evidence type="ECO:0000250" key="1"/>
<evidence type="ECO:0000255" key="2">
    <source>
        <dbReference type="HAMAP-Rule" id="MF_00047"/>
    </source>
</evidence>
<keyword id="KW-0067">ATP-binding</keyword>
<keyword id="KW-0133">Cell shape</keyword>
<keyword id="KW-0961">Cell wall biogenesis/degradation</keyword>
<keyword id="KW-0963">Cytoplasm</keyword>
<keyword id="KW-0436">Ligase</keyword>
<keyword id="KW-0460">Magnesium</keyword>
<keyword id="KW-0464">Manganese</keyword>
<keyword id="KW-0479">Metal-binding</keyword>
<keyword id="KW-0547">Nucleotide-binding</keyword>
<keyword id="KW-0573">Peptidoglycan synthesis</keyword>
<protein>
    <recommendedName>
        <fullName evidence="2">D-alanine--D-alanine ligase</fullName>
        <ecNumber evidence="2">6.3.2.4</ecNumber>
    </recommendedName>
    <alternativeName>
        <fullName evidence="2">D-Ala-D-Ala ligase</fullName>
    </alternativeName>
    <alternativeName>
        <fullName evidence="2">D-alanylalanine synthetase</fullName>
    </alternativeName>
</protein>
<dbReference type="EC" id="6.3.2.4" evidence="2"/>
<dbReference type="EMBL" id="CP000702">
    <property type="protein sequence ID" value="ABQ46685.1"/>
    <property type="molecule type" value="Genomic_DNA"/>
</dbReference>
<dbReference type="RefSeq" id="WP_011943275.1">
    <property type="nucleotide sequence ID" value="NC_009486.1"/>
</dbReference>
<dbReference type="SMR" id="A5IKG2"/>
<dbReference type="STRING" id="390874.Tpet_0665"/>
<dbReference type="KEGG" id="tpt:Tpet_0665"/>
<dbReference type="eggNOG" id="COG1181">
    <property type="taxonomic scope" value="Bacteria"/>
</dbReference>
<dbReference type="HOGENOM" id="CLU_039268_1_1_0"/>
<dbReference type="UniPathway" id="UPA00219"/>
<dbReference type="Proteomes" id="UP000006558">
    <property type="component" value="Chromosome"/>
</dbReference>
<dbReference type="GO" id="GO:0005737">
    <property type="term" value="C:cytoplasm"/>
    <property type="evidence" value="ECO:0007669"/>
    <property type="project" value="UniProtKB-SubCell"/>
</dbReference>
<dbReference type="GO" id="GO:0005524">
    <property type="term" value="F:ATP binding"/>
    <property type="evidence" value="ECO:0007669"/>
    <property type="project" value="UniProtKB-KW"/>
</dbReference>
<dbReference type="GO" id="GO:0008716">
    <property type="term" value="F:D-alanine-D-alanine ligase activity"/>
    <property type="evidence" value="ECO:0007669"/>
    <property type="project" value="UniProtKB-UniRule"/>
</dbReference>
<dbReference type="GO" id="GO:0046872">
    <property type="term" value="F:metal ion binding"/>
    <property type="evidence" value="ECO:0007669"/>
    <property type="project" value="UniProtKB-KW"/>
</dbReference>
<dbReference type="GO" id="GO:0071555">
    <property type="term" value="P:cell wall organization"/>
    <property type="evidence" value="ECO:0007669"/>
    <property type="project" value="UniProtKB-KW"/>
</dbReference>
<dbReference type="GO" id="GO:0009252">
    <property type="term" value="P:peptidoglycan biosynthetic process"/>
    <property type="evidence" value="ECO:0007669"/>
    <property type="project" value="UniProtKB-UniRule"/>
</dbReference>
<dbReference type="GO" id="GO:0008360">
    <property type="term" value="P:regulation of cell shape"/>
    <property type="evidence" value="ECO:0007669"/>
    <property type="project" value="UniProtKB-KW"/>
</dbReference>
<dbReference type="FunFam" id="3.30.1490.20:FF:000057">
    <property type="entry name" value="D-alanine--D-alanine ligase"/>
    <property type="match status" value="1"/>
</dbReference>
<dbReference type="Gene3D" id="3.40.50.20">
    <property type="match status" value="1"/>
</dbReference>
<dbReference type="Gene3D" id="3.30.1490.20">
    <property type="entry name" value="ATP-grasp fold, A domain"/>
    <property type="match status" value="1"/>
</dbReference>
<dbReference type="Gene3D" id="3.30.470.20">
    <property type="entry name" value="ATP-grasp fold, B domain"/>
    <property type="match status" value="1"/>
</dbReference>
<dbReference type="HAMAP" id="MF_00047">
    <property type="entry name" value="Dala_Dala_lig"/>
    <property type="match status" value="1"/>
</dbReference>
<dbReference type="InterPro" id="IPR011761">
    <property type="entry name" value="ATP-grasp"/>
</dbReference>
<dbReference type="InterPro" id="IPR013815">
    <property type="entry name" value="ATP_grasp_subdomain_1"/>
</dbReference>
<dbReference type="InterPro" id="IPR000291">
    <property type="entry name" value="D-Ala_lig_Van_CS"/>
</dbReference>
<dbReference type="InterPro" id="IPR005905">
    <property type="entry name" value="D_ala_D_ala"/>
</dbReference>
<dbReference type="InterPro" id="IPR011095">
    <property type="entry name" value="Dala_Dala_lig_C"/>
</dbReference>
<dbReference type="InterPro" id="IPR011127">
    <property type="entry name" value="Dala_Dala_lig_N"/>
</dbReference>
<dbReference type="InterPro" id="IPR016185">
    <property type="entry name" value="PreATP-grasp_dom_sf"/>
</dbReference>
<dbReference type="NCBIfam" id="TIGR01205">
    <property type="entry name" value="D_ala_D_alaTIGR"/>
    <property type="match status" value="1"/>
</dbReference>
<dbReference type="NCBIfam" id="NF002378">
    <property type="entry name" value="PRK01372.1"/>
    <property type="match status" value="1"/>
</dbReference>
<dbReference type="NCBIfam" id="NF011169">
    <property type="entry name" value="PRK14571.1"/>
    <property type="match status" value="1"/>
</dbReference>
<dbReference type="PANTHER" id="PTHR23132">
    <property type="entry name" value="D-ALANINE--D-ALANINE LIGASE"/>
    <property type="match status" value="1"/>
</dbReference>
<dbReference type="PANTHER" id="PTHR23132:SF23">
    <property type="entry name" value="D-ALANINE--D-ALANINE LIGASE B"/>
    <property type="match status" value="1"/>
</dbReference>
<dbReference type="Pfam" id="PF07478">
    <property type="entry name" value="Dala_Dala_lig_C"/>
    <property type="match status" value="1"/>
</dbReference>
<dbReference type="Pfam" id="PF01820">
    <property type="entry name" value="Dala_Dala_lig_N"/>
    <property type="match status" value="1"/>
</dbReference>
<dbReference type="PIRSF" id="PIRSF039102">
    <property type="entry name" value="Ddl/VanB"/>
    <property type="match status" value="1"/>
</dbReference>
<dbReference type="SUPFAM" id="SSF56059">
    <property type="entry name" value="Glutathione synthetase ATP-binding domain-like"/>
    <property type="match status" value="1"/>
</dbReference>
<dbReference type="SUPFAM" id="SSF52440">
    <property type="entry name" value="PreATP-grasp domain"/>
    <property type="match status" value="1"/>
</dbReference>
<dbReference type="PROSITE" id="PS50975">
    <property type="entry name" value="ATP_GRASP"/>
    <property type="match status" value="1"/>
</dbReference>
<dbReference type="PROSITE" id="PS00843">
    <property type="entry name" value="DALA_DALA_LIGASE_1"/>
    <property type="match status" value="1"/>
</dbReference>
<dbReference type="PROSITE" id="PS00844">
    <property type="entry name" value="DALA_DALA_LIGASE_2"/>
    <property type="match status" value="1"/>
</dbReference>
<feature type="chain" id="PRO_1000030517" description="D-alanine--D-alanine ligase">
    <location>
        <begin position="1"/>
        <end position="303"/>
    </location>
</feature>
<feature type="domain" description="ATP-grasp" evidence="2">
    <location>
        <begin position="99"/>
        <end position="293"/>
    </location>
</feature>
<feature type="binding site" evidence="2">
    <location>
        <begin position="125"/>
        <end position="176"/>
    </location>
    <ligand>
        <name>ATP</name>
        <dbReference type="ChEBI" id="CHEBI:30616"/>
    </ligand>
</feature>
<feature type="binding site" evidence="2">
    <location>
        <position position="248"/>
    </location>
    <ligand>
        <name>Mg(2+)</name>
        <dbReference type="ChEBI" id="CHEBI:18420"/>
        <label>1</label>
    </ligand>
</feature>
<feature type="binding site" evidence="2">
    <location>
        <position position="260"/>
    </location>
    <ligand>
        <name>Mg(2+)</name>
        <dbReference type="ChEBI" id="CHEBI:18420"/>
        <label>1</label>
    </ligand>
</feature>
<feature type="binding site" evidence="2">
    <location>
        <position position="260"/>
    </location>
    <ligand>
        <name>Mg(2+)</name>
        <dbReference type="ChEBI" id="CHEBI:18420"/>
        <label>2</label>
    </ligand>
</feature>
<feature type="binding site" evidence="2">
    <location>
        <position position="262"/>
    </location>
    <ligand>
        <name>Mg(2+)</name>
        <dbReference type="ChEBI" id="CHEBI:18420"/>
        <label>2</label>
    </ligand>
</feature>
<organism>
    <name type="scientific">Thermotoga petrophila (strain ATCC BAA-488 / DSM 13995 / JCM 10881 / RKU-1)</name>
    <dbReference type="NCBI Taxonomy" id="390874"/>
    <lineage>
        <taxon>Bacteria</taxon>
        <taxon>Thermotogati</taxon>
        <taxon>Thermotogota</taxon>
        <taxon>Thermotogae</taxon>
        <taxon>Thermotogales</taxon>
        <taxon>Thermotogaceae</taxon>
        <taxon>Thermotoga</taxon>
    </lineage>
</organism>
<proteinExistence type="inferred from homology"/>
<name>DDL_THEP1</name>
<comment type="function">
    <text evidence="2">Cell wall formation.</text>
</comment>
<comment type="catalytic activity">
    <reaction evidence="2">
        <text>2 D-alanine + ATP = D-alanyl-D-alanine + ADP + phosphate + H(+)</text>
        <dbReference type="Rhea" id="RHEA:11224"/>
        <dbReference type="ChEBI" id="CHEBI:15378"/>
        <dbReference type="ChEBI" id="CHEBI:30616"/>
        <dbReference type="ChEBI" id="CHEBI:43474"/>
        <dbReference type="ChEBI" id="CHEBI:57416"/>
        <dbReference type="ChEBI" id="CHEBI:57822"/>
        <dbReference type="ChEBI" id="CHEBI:456216"/>
        <dbReference type="EC" id="6.3.2.4"/>
    </reaction>
</comment>
<comment type="cofactor">
    <cofactor evidence="1">
        <name>Mg(2+)</name>
        <dbReference type="ChEBI" id="CHEBI:18420"/>
    </cofactor>
    <cofactor evidence="1">
        <name>Mn(2+)</name>
        <dbReference type="ChEBI" id="CHEBI:29035"/>
    </cofactor>
    <text evidence="1">Binds 2 magnesium or manganese ions per subunit.</text>
</comment>
<comment type="pathway">
    <text evidence="2">Cell wall biogenesis; peptidoglycan biosynthesis.</text>
</comment>
<comment type="subcellular location">
    <subcellularLocation>
        <location evidence="2">Cytoplasm</location>
    </subcellularLocation>
</comment>
<comment type="similarity">
    <text evidence="2">Belongs to the D-alanine--D-alanine ligase family.</text>
</comment>
<reference key="1">
    <citation type="submission" date="2007-05" db="EMBL/GenBank/DDBJ databases">
        <title>Complete sequence of Thermotoga petrophila RKU-1.</title>
        <authorList>
            <consortium name="US DOE Joint Genome Institute"/>
            <person name="Copeland A."/>
            <person name="Lucas S."/>
            <person name="Lapidus A."/>
            <person name="Barry K."/>
            <person name="Glavina del Rio T."/>
            <person name="Dalin E."/>
            <person name="Tice H."/>
            <person name="Pitluck S."/>
            <person name="Sims D."/>
            <person name="Brettin T."/>
            <person name="Bruce D."/>
            <person name="Detter J.C."/>
            <person name="Han C."/>
            <person name="Tapia R."/>
            <person name="Schmutz J."/>
            <person name="Larimer F."/>
            <person name="Land M."/>
            <person name="Hauser L."/>
            <person name="Kyrpides N."/>
            <person name="Mikhailova N."/>
            <person name="Nelson K."/>
            <person name="Gogarten J.P."/>
            <person name="Noll K."/>
            <person name="Richardson P."/>
        </authorList>
    </citation>
    <scope>NUCLEOTIDE SEQUENCE [LARGE SCALE GENOMIC DNA]</scope>
    <source>
        <strain>ATCC BAA-488 / DSM 13995 / JCM 10881 / RKU-1</strain>
    </source>
</reference>
<accession>A5IKG2</accession>
<sequence>MRVALLMGGVSREREISLRSGERVKKALEKLGYEYTVFDVKEDFLKEVDQLKSFDVVFNVLHGTFGEDGTLQAILDFLGIRYTGSDAFSSMICFDKLATYRFLKDIVEIPDFIEIREFMETSPLGYPCVVKPRREGSSIGVFICESDEEFQHALKEDLPRYGSVIVQKYIPGREMTVSILETEKGFEVLPILELRPKRRFYDYVAKYTKGETEFILPAPLNPSEERLVKETALKAFVEAGCRGFGRVDGIFSNGRFYFLEINTVPGLTETSDLPASAKAGGIEFEELVEIILKSAFLKGEVRA</sequence>
<gene>
    <name evidence="2" type="primary">ddl</name>
    <name type="ordered locus">Tpet_0665</name>
</gene>